<keyword id="KW-0574">Periplasm</keyword>
<keyword id="KW-1185">Reference proteome</keyword>
<keyword id="KW-0732">Signal</keyword>
<feature type="signal peptide" evidence="1">
    <location>
        <begin position="1"/>
        <end position="22"/>
    </location>
</feature>
<feature type="chain" id="PRO_5004602906" description="Uncharacterized protein P23">
    <location>
        <begin position="23"/>
        <end position="413"/>
    </location>
</feature>
<comment type="function">
    <text evidence="4">May be involved in ulvan degradation (Probable). Ulvan is the main polysaccharide component of the Ulvales (green seaweed) cell wall. It is composed of disaccharide building blocks comprising 3-sulfated rhamnose (Rha3S) linked to D-glucuronic acid (GlcA), L-iduronic acid (IduA), or D-xylose (Xyl) (Probable).</text>
</comment>
<comment type="subcellular location">
    <subcellularLocation>
        <location evidence="4">Periplasm</location>
    </subcellularLocation>
</comment>
<comment type="induction">
    <text evidence="2">By ulvan.</text>
</comment>
<gene>
    <name type="ORF">BN863_22120</name>
</gene>
<organism>
    <name type="scientific">Formosa agariphila (strain DSM 15362 / KCTC 12365 / LMG 23005 / KMM 3901 / M-2Alg 35-1)</name>
    <dbReference type="NCBI Taxonomy" id="1347342"/>
    <lineage>
        <taxon>Bacteria</taxon>
        <taxon>Pseudomonadati</taxon>
        <taxon>Bacteroidota</taxon>
        <taxon>Flavobacteriia</taxon>
        <taxon>Flavobacteriales</taxon>
        <taxon>Flavobacteriaceae</taxon>
        <taxon>Formosa</taxon>
    </lineage>
</organism>
<dbReference type="EMBL" id="HG315671">
    <property type="protein sequence ID" value="CDF79924.1"/>
    <property type="molecule type" value="Genomic_DNA"/>
</dbReference>
<dbReference type="RefSeq" id="WP_193363881.1">
    <property type="nucleotide sequence ID" value="NZ_HG315671.1"/>
</dbReference>
<dbReference type="STRING" id="1347342.BN863_22120"/>
<dbReference type="PATRIC" id="fig|1347342.6.peg.2219"/>
<dbReference type="eggNOG" id="COG3055">
    <property type="taxonomic scope" value="Bacteria"/>
</dbReference>
<dbReference type="HOGENOM" id="CLU_665245_0_0_10"/>
<dbReference type="Proteomes" id="UP000016160">
    <property type="component" value="Chromosome"/>
</dbReference>
<dbReference type="GO" id="GO:0042597">
    <property type="term" value="C:periplasmic space"/>
    <property type="evidence" value="ECO:0007669"/>
    <property type="project" value="UniProtKB-SubCell"/>
</dbReference>
<dbReference type="Gene3D" id="2.60.120.1620">
    <property type="match status" value="1"/>
</dbReference>
<proteinExistence type="evidence at transcript level"/>
<protein>
    <recommendedName>
        <fullName evidence="3">Uncharacterized protein P23</fullName>
    </recommendedName>
    <alternativeName>
        <fullName evidence="3">Polysaccharide utilization locus H protein P23</fullName>
        <shortName>PUL H protein P23</shortName>
    </alternativeName>
</protein>
<sequence>MKKSKASALLWLFSLVGFMLHAQTFNLNQPMVAQNVIFEEKDGLVAVEAEYFYKQTHTDLREWYRTTKDSVAVVGRDEDANHYLNASNSSYIEVLPDTRVTHSDQLVRGVNFSNKPGQLAVVSYKIKFNSPGRYYVWVRALSTGSEDNGLHVGLNGTWPEHGQRMQWCDGKKYWMWESKQRTKDEHCGVPHAIYLDVPKAGIHEVQFSMREDGFEFDKFVLTTNSNYVPIDKGPNMTLADGNLPSSYKSKSEPSYFNTIARKLPENKFIASQEFPIDGTNFYKNGKNWLAINPEQYKQAKISTLFDFESGTYDVIYVGVGENDGRSTFRIVINNKELGTYQPPLTQMLWEEGKAFNGFWKNVKLNKGDTITVEVQVASDGNEWTRGRWAGIVFAPVGQGYVVQESPSTYIFEK</sequence>
<accession>T2KPK8</accession>
<evidence type="ECO:0000255" key="1"/>
<evidence type="ECO:0000269" key="2">
    <source>
    </source>
</evidence>
<evidence type="ECO:0000303" key="3">
    <source>
    </source>
</evidence>
<evidence type="ECO:0000305" key="4">
    <source>
    </source>
</evidence>
<name>PLH23_FORAG</name>
<reference key="1">
    <citation type="journal article" date="2013" name="Appl. Environ. Microbiol.">
        <title>The genome of the alga-associated marine flavobacterium Formosa agariphila KMM 3901T reveals a broad potential for degradation of algal polysaccharides.</title>
        <authorList>
            <person name="Mann A.J."/>
            <person name="Hahnke R.L."/>
            <person name="Huang S."/>
            <person name="Werner J."/>
            <person name="Xing P."/>
            <person name="Barbeyron T."/>
            <person name="Huettel B."/>
            <person name="Stueber K."/>
            <person name="Reinhardt R."/>
            <person name="Harder J."/>
            <person name="Gloeckner F.O."/>
            <person name="Amann R.I."/>
            <person name="Teeling H."/>
        </authorList>
    </citation>
    <scope>NUCLEOTIDE SEQUENCE [LARGE SCALE GENOMIC DNA]</scope>
    <source>
        <strain>DSM 15362 / KCTC 12365 / LMG 23005 / KMM 3901 / M-2Alg 35-1</strain>
    </source>
</reference>
<reference key="2">
    <citation type="journal article" date="2019" name="Nat. Chem. Biol.">
        <title>A marine bacterial enzymatic cascade degrades the algal polysaccharide ulvan.</title>
        <authorList>
            <person name="Reisky L."/>
            <person name="Prechoux A."/>
            <person name="Zuehlke M.K."/>
            <person name="Baeumgen M."/>
            <person name="Robb C.S."/>
            <person name="Gerlach N."/>
            <person name="Roret T."/>
            <person name="Stanetty C."/>
            <person name="Larocque R."/>
            <person name="Michel G."/>
            <person name="Song T."/>
            <person name="Markert S."/>
            <person name="Unfried F."/>
            <person name="Mihovilovic M.D."/>
            <person name="Trautwein-Schult A."/>
            <person name="Becher D."/>
            <person name="Schweder T."/>
            <person name="Bornscheuer U.T."/>
            <person name="Hehemann J.H."/>
        </authorList>
    </citation>
    <scope>FUNCTION</scope>
    <scope>SUBCELLULAR LOCATION</scope>
    <scope>INDUCTION</scope>
</reference>